<gene>
    <name evidence="1" type="primary">rbsD</name>
    <name type="ordered locus">SbBS512_E4172</name>
</gene>
<reference key="1">
    <citation type="submission" date="2008-05" db="EMBL/GenBank/DDBJ databases">
        <title>Complete sequence of Shigella boydii serotype 18 strain BS512.</title>
        <authorList>
            <person name="Rasko D.A."/>
            <person name="Rosovitz M."/>
            <person name="Maurelli A.T."/>
            <person name="Myers G."/>
            <person name="Seshadri R."/>
            <person name="Cer R."/>
            <person name="Jiang L."/>
            <person name="Ravel J."/>
            <person name="Sebastian Y."/>
        </authorList>
    </citation>
    <scope>NUCLEOTIDE SEQUENCE [LARGE SCALE GENOMIC DNA]</scope>
    <source>
        <strain>CDC 3083-94 / BS512</strain>
    </source>
</reference>
<keyword id="KW-0119">Carbohydrate metabolism</keyword>
<keyword id="KW-0963">Cytoplasm</keyword>
<keyword id="KW-0413">Isomerase</keyword>
<keyword id="KW-1185">Reference proteome</keyword>
<comment type="function">
    <text evidence="1">Catalyzes the interconversion of beta-pyran and beta-furan forms of D-ribose.</text>
</comment>
<comment type="catalytic activity">
    <reaction evidence="1">
        <text>beta-D-ribopyranose = beta-D-ribofuranose</text>
        <dbReference type="Rhea" id="RHEA:25432"/>
        <dbReference type="ChEBI" id="CHEBI:27476"/>
        <dbReference type="ChEBI" id="CHEBI:47002"/>
        <dbReference type="EC" id="5.4.99.62"/>
    </reaction>
</comment>
<comment type="pathway">
    <text evidence="1">Carbohydrate metabolism; D-ribose degradation; D-ribose 5-phosphate from beta-D-ribopyranose: step 1/2.</text>
</comment>
<comment type="subunit">
    <text evidence="1">Homodecamer.</text>
</comment>
<comment type="subcellular location">
    <subcellularLocation>
        <location evidence="1">Cytoplasm</location>
    </subcellularLocation>
</comment>
<comment type="similarity">
    <text evidence="1">Belongs to the RbsD / FucU family. RbsD subfamily.</text>
</comment>
<sequence length="139" mass="15283">MKKGTVLNSDISSVISRLGHTDTLVVCDAGLPIPKSTTRIDMALTQGVPSFMQVLGVVTNEMQVEAAIIAEEIKQHNPQLHETLLTHLEQLQKHQGNTIEIRYTTHEQFKQQTAESQAVIRSGECSPYANIILCAGVTF</sequence>
<dbReference type="EC" id="5.4.99.62" evidence="1"/>
<dbReference type="EMBL" id="CP001063">
    <property type="protein sequence ID" value="ACD08548.1"/>
    <property type="molecule type" value="Genomic_DNA"/>
</dbReference>
<dbReference type="RefSeq" id="WP_000715936.1">
    <property type="nucleotide sequence ID" value="NC_010658.1"/>
</dbReference>
<dbReference type="SMR" id="B2TU31"/>
<dbReference type="STRING" id="344609.SbBS512_E4172"/>
<dbReference type="GeneID" id="93778201"/>
<dbReference type="KEGG" id="sbc:SbBS512_E4172"/>
<dbReference type="HOGENOM" id="CLU_135498_0_0_6"/>
<dbReference type="UniPathway" id="UPA00916">
    <property type="reaction ID" value="UER00888"/>
</dbReference>
<dbReference type="Proteomes" id="UP000001030">
    <property type="component" value="Chromosome"/>
</dbReference>
<dbReference type="GO" id="GO:0005829">
    <property type="term" value="C:cytosol"/>
    <property type="evidence" value="ECO:0007669"/>
    <property type="project" value="TreeGrafter"/>
</dbReference>
<dbReference type="GO" id="GO:0062193">
    <property type="term" value="F:D-ribose pyranase activity"/>
    <property type="evidence" value="ECO:0007669"/>
    <property type="project" value="UniProtKB-EC"/>
</dbReference>
<dbReference type="GO" id="GO:0016872">
    <property type="term" value="F:intramolecular lyase activity"/>
    <property type="evidence" value="ECO:0007669"/>
    <property type="project" value="UniProtKB-UniRule"/>
</dbReference>
<dbReference type="GO" id="GO:0048029">
    <property type="term" value="F:monosaccharide binding"/>
    <property type="evidence" value="ECO:0007669"/>
    <property type="project" value="InterPro"/>
</dbReference>
<dbReference type="GO" id="GO:0019303">
    <property type="term" value="P:D-ribose catabolic process"/>
    <property type="evidence" value="ECO:0007669"/>
    <property type="project" value="UniProtKB-UniRule"/>
</dbReference>
<dbReference type="FunFam" id="3.40.1650.10:FF:000002">
    <property type="entry name" value="D-ribose pyranase"/>
    <property type="match status" value="1"/>
</dbReference>
<dbReference type="Gene3D" id="3.40.1650.10">
    <property type="entry name" value="RbsD-like domain"/>
    <property type="match status" value="1"/>
</dbReference>
<dbReference type="HAMAP" id="MF_01661">
    <property type="entry name" value="D_rib_pyranase"/>
    <property type="match status" value="1"/>
</dbReference>
<dbReference type="InterPro" id="IPR023064">
    <property type="entry name" value="D-ribose_pyranase"/>
</dbReference>
<dbReference type="InterPro" id="IPR023750">
    <property type="entry name" value="RbsD-like_sf"/>
</dbReference>
<dbReference type="InterPro" id="IPR007721">
    <property type="entry name" value="RbsD_FucU"/>
</dbReference>
<dbReference type="NCBIfam" id="NF008761">
    <property type="entry name" value="PRK11797.1"/>
    <property type="match status" value="1"/>
</dbReference>
<dbReference type="PANTHER" id="PTHR37831">
    <property type="entry name" value="D-RIBOSE PYRANASE"/>
    <property type="match status" value="1"/>
</dbReference>
<dbReference type="PANTHER" id="PTHR37831:SF1">
    <property type="entry name" value="D-RIBOSE PYRANASE"/>
    <property type="match status" value="1"/>
</dbReference>
<dbReference type="Pfam" id="PF05025">
    <property type="entry name" value="RbsD_FucU"/>
    <property type="match status" value="1"/>
</dbReference>
<dbReference type="SUPFAM" id="SSF102546">
    <property type="entry name" value="RbsD-like"/>
    <property type="match status" value="1"/>
</dbReference>
<accession>B2TU31</accession>
<feature type="chain" id="PRO_1000187167" description="D-ribose pyranase">
    <location>
        <begin position="1"/>
        <end position="139"/>
    </location>
</feature>
<feature type="active site" description="Proton donor" evidence="1">
    <location>
        <position position="20"/>
    </location>
</feature>
<feature type="binding site" evidence="1">
    <location>
        <position position="28"/>
    </location>
    <ligand>
        <name>substrate</name>
    </ligand>
</feature>
<feature type="binding site" evidence="1">
    <location>
        <position position="106"/>
    </location>
    <ligand>
        <name>substrate</name>
    </ligand>
</feature>
<feature type="binding site" evidence="1">
    <location>
        <begin position="128"/>
        <end position="130"/>
    </location>
    <ligand>
        <name>substrate</name>
    </ligand>
</feature>
<organism>
    <name type="scientific">Shigella boydii serotype 18 (strain CDC 3083-94 / BS512)</name>
    <dbReference type="NCBI Taxonomy" id="344609"/>
    <lineage>
        <taxon>Bacteria</taxon>
        <taxon>Pseudomonadati</taxon>
        <taxon>Pseudomonadota</taxon>
        <taxon>Gammaproteobacteria</taxon>
        <taxon>Enterobacterales</taxon>
        <taxon>Enterobacteriaceae</taxon>
        <taxon>Shigella</taxon>
    </lineage>
</organism>
<protein>
    <recommendedName>
        <fullName evidence="1">D-ribose pyranase</fullName>
        <ecNumber evidence="1">5.4.99.62</ecNumber>
    </recommendedName>
</protein>
<proteinExistence type="inferred from homology"/>
<name>RBSD_SHIB3</name>
<evidence type="ECO:0000255" key="1">
    <source>
        <dbReference type="HAMAP-Rule" id="MF_01661"/>
    </source>
</evidence>